<feature type="chain" id="PRO_0000350631" description="Fat storage-inducing transmembrane protein 1">
    <location>
        <begin position="1"/>
        <end position="290"/>
    </location>
</feature>
<feature type="transmembrane region" description="Helical" evidence="2">
    <location>
        <begin position="1"/>
        <end position="21"/>
    </location>
</feature>
<feature type="transmembrane region" description="Helical" evidence="2">
    <location>
        <begin position="26"/>
        <end position="46"/>
    </location>
</feature>
<feature type="transmembrane region" description="Helical" evidence="2">
    <location>
        <begin position="65"/>
        <end position="85"/>
    </location>
</feature>
<feature type="transmembrane region" description="Helical" evidence="2">
    <location>
        <begin position="173"/>
        <end position="193"/>
    </location>
</feature>
<feature type="transmembrane region" description="Helical" evidence="2">
    <location>
        <begin position="205"/>
        <end position="225"/>
    </location>
</feature>
<proteinExistence type="evidence at transcript level"/>
<evidence type="ECO:0000250" key="1">
    <source>
        <dbReference type="UniProtKB" id="A5D6W6"/>
    </source>
</evidence>
<evidence type="ECO:0000255" key="2"/>
<evidence type="ECO:0000255" key="3">
    <source>
        <dbReference type="HAMAP-Rule" id="MF_03229"/>
    </source>
</evidence>
<dbReference type="EMBL" id="BC090787">
    <property type="protein sequence ID" value="AAH90787.1"/>
    <property type="molecule type" value="mRNA"/>
</dbReference>
<dbReference type="RefSeq" id="NP_001013343.1">
    <property type="nucleotide sequence ID" value="NM_001013325.2"/>
</dbReference>
<dbReference type="FunCoup" id="Q5CZN0">
    <property type="interactions" value="76"/>
</dbReference>
<dbReference type="STRING" id="7955.ENSDARP00000073429"/>
<dbReference type="PaxDb" id="7955-ENSDARP00000073429"/>
<dbReference type="AGR" id="ZFIN:ZDB-GENE-050306-28"/>
<dbReference type="ZFIN" id="ZDB-GENE-050306-28">
    <property type="gene designation" value="fitm1l"/>
</dbReference>
<dbReference type="eggNOG" id="KOG3750">
    <property type="taxonomic scope" value="Eukaryota"/>
</dbReference>
<dbReference type="InParanoid" id="Q5CZN0"/>
<dbReference type="OrthoDB" id="5579088at2759"/>
<dbReference type="PhylomeDB" id="Q5CZN0"/>
<dbReference type="Reactome" id="R-DRE-8964572">
    <property type="pathway name" value="Lipid particle organization"/>
</dbReference>
<dbReference type="PRO" id="PR:Q5CZN0"/>
<dbReference type="Proteomes" id="UP000000437">
    <property type="component" value="Chromosome 2"/>
</dbReference>
<dbReference type="GO" id="GO:0005789">
    <property type="term" value="C:endoplasmic reticulum membrane"/>
    <property type="evidence" value="ECO:0000318"/>
    <property type="project" value="GO_Central"/>
</dbReference>
<dbReference type="GO" id="GO:0010945">
    <property type="term" value="F:coenzyme A diphosphatase activity"/>
    <property type="evidence" value="ECO:0007669"/>
    <property type="project" value="InterPro"/>
</dbReference>
<dbReference type="GO" id="GO:0019992">
    <property type="term" value="F:diacylglycerol binding"/>
    <property type="evidence" value="ECO:0000250"/>
    <property type="project" value="UniProtKB"/>
</dbReference>
<dbReference type="GO" id="GO:0017129">
    <property type="term" value="F:triglyceride binding"/>
    <property type="evidence" value="ECO:0000250"/>
    <property type="project" value="UniProtKB"/>
</dbReference>
<dbReference type="GO" id="GO:0140042">
    <property type="term" value="P:lipid droplet formation"/>
    <property type="evidence" value="ECO:0000250"/>
    <property type="project" value="UniProtKB"/>
</dbReference>
<dbReference type="GO" id="GO:0034389">
    <property type="term" value="P:lipid droplet organization"/>
    <property type="evidence" value="ECO:0000318"/>
    <property type="project" value="GO_Central"/>
</dbReference>
<dbReference type="GO" id="GO:0019915">
    <property type="term" value="P:lipid storage"/>
    <property type="evidence" value="ECO:0000318"/>
    <property type="project" value="GO_Central"/>
</dbReference>
<dbReference type="GO" id="GO:0008654">
    <property type="term" value="P:phospholipid biosynthetic process"/>
    <property type="evidence" value="ECO:0000318"/>
    <property type="project" value="GO_Central"/>
</dbReference>
<dbReference type="HAMAP" id="MF_03229">
    <property type="entry name" value="FITM1"/>
    <property type="match status" value="1"/>
</dbReference>
<dbReference type="HAMAP" id="MF_03230">
    <property type="entry name" value="FITM2"/>
    <property type="match status" value="1"/>
</dbReference>
<dbReference type="InterPro" id="IPR019388">
    <property type="entry name" value="FIT"/>
</dbReference>
<dbReference type="InterPro" id="IPR046402">
    <property type="entry name" value="FIT1"/>
</dbReference>
<dbReference type="InterPro" id="IPR046401">
    <property type="entry name" value="FITM1/2"/>
</dbReference>
<dbReference type="PANTHER" id="PTHR23129">
    <property type="entry name" value="ACYL-COENZYME A DIPHOSPHATASE FITM2"/>
    <property type="match status" value="1"/>
</dbReference>
<dbReference type="PANTHER" id="PTHR23129:SF3">
    <property type="entry name" value="FAT STORAGE-INDUCING TRANSMEMBRANE PROTEIN 1"/>
    <property type="match status" value="1"/>
</dbReference>
<dbReference type="Pfam" id="PF10261">
    <property type="entry name" value="FIT"/>
    <property type="match status" value="1"/>
</dbReference>
<accession>Q5CZN0</accession>
<gene>
    <name type="primary">fitm1l</name>
    <name evidence="3" type="synonym">fit1</name>
    <name evidence="3" type="synonym">fitm1</name>
    <name type="ORF">zgc:112967</name>
</gene>
<organism>
    <name type="scientific">Danio rerio</name>
    <name type="common">Zebrafish</name>
    <name type="synonym">Brachydanio rerio</name>
    <dbReference type="NCBI Taxonomy" id="7955"/>
    <lineage>
        <taxon>Eukaryota</taxon>
        <taxon>Metazoa</taxon>
        <taxon>Chordata</taxon>
        <taxon>Craniata</taxon>
        <taxon>Vertebrata</taxon>
        <taxon>Euteleostomi</taxon>
        <taxon>Actinopterygii</taxon>
        <taxon>Neopterygii</taxon>
        <taxon>Teleostei</taxon>
        <taxon>Ostariophysi</taxon>
        <taxon>Cypriniformes</taxon>
        <taxon>Danionidae</taxon>
        <taxon>Danioninae</taxon>
        <taxon>Danio</taxon>
    </lineage>
</organism>
<name>FITM1_DANRE</name>
<comment type="function">
    <text evidence="3">May play an important role in the formation of lipid droplets (LDs) which are storage organelles at the center of lipid and energy homeostasis (By similarity). May directly bind to diacylglycerol (DAGs) and triacylglycerol (By similarity).</text>
</comment>
<comment type="subcellular location">
    <subcellularLocation>
        <location evidence="3">Endoplasmic reticulum membrane</location>
        <topology evidence="3">Multi-pass membrane protein</topology>
    </subcellularLocation>
</comment>
<comment type="similarity">
    <text evidence="3">Belongs to the FIT family. FIT1 subfamily.</text>
</comment>
<keyword id="KW-0256">Endoplasmic reticulum</keyword>
<keyword id="KW-0472">Membrane</keyword>
<keyword id="KW-1185">Reference proteome</keyword>
<keyword id="KW-0812">Transmembrane</keyword>
<keyword id="KW-1133">Transmembrane helix</keyword>
<reference key="1">
    <citation type="submission" date="2005-02" db="EMBL/GenBank/DDBJ databases">
        <authorList>
            <consortium name="NIH - Zebrafish Gene Collection (ZGC) project"/>
        </authorList>
    </citation>
    <scope>NUCLEOTIDE SEQUENCE [LARGE SCALE MRNA]</scope>
    <source>
        <tissue>Embryo</tissue>
    </source>
</reference>
<reference key="2">
    <citation type="journal article" date="2008" name="Proc. Natl. Acad. Sci. U.S.A.">
        <title>Evolutionarily conserved gene family important for fat storage.</title>
        <authorList>
            <person name="Kadereit B."/>
            <person name="Kumar P."/>
            <person name="Wang W.-J."/>
            <person name="Miranda D."/>
            <person name="Snapp E.L."/>
            <person name="Severina N."/>
            <person name="Torregroza I."/>
            <person name="Evans T."/>
            <person name="Silver D.L."/>
        </authorList>
    </citation>
    <scope>IDENTIFICATION AS FITM1</scope>
</reference>
<sequence>MFLNSILVVITDLAAGLLGNTSFRRHFHLLLSALLLFGPLLSLWVSHYSVFAKRTHFLYRVFLRSGWGWTCIFVGSFVFVLSFSVRRSLTLSLRHLSRLAVAGGLWLGFRKLLCLLENATGSCYEPLSAALEMTSGTNGEGQPLLLLREAETKETCVRSGMLWRGYEVSEDALLLCLCCLLLAEETAVFGPYLNLGGPSEAPLRILFLFCVLLLSLWVFLLLCLLAYFPEFPTQLLGGALGCLSWRALYQGWYRLRPSWYCPGRPGVGLLSTQSKQDELLETQTNAKEID</sequence>
<protein>
    <recommendedName>
        <fullName evidence="1 3">Fat storage-inducing transmembrane protein 1</fullName>
    </recommendedName>
    <alternativeName>
        <fullName evidence="3">FITM1-like protein</fullName>
    </alternativeName>
    <alternativeName>
        <fullName evidence="3">Fat-inducing protein 1</fullName>
    </alternativeName>
</protein>